<feature type="chain" id="PRO_0000116920" description="Adenosylhomocysteinase 1">
    <location>
        <begin position="1"/>
        <end position="485"/>
    </location>
</feature>
<feature type="binding site" evidence="1">
    <location>
        <position position="64"/>
    </location>
    <ligand>
        <name>substrate</name>
    </ligand>
</feature>
<feature type="binding site" evidence="1">
    <location>
        <position position="139"/>
    </location>
    <ligand>
        <name>substrate</name>
    </ligand>
</feature>
<feature type="binding site" evidence="1">
    <location>
        <position position="205"/>
    </location>
    <ligand>
        <name>substrate</name>
    </ligand>
</feature>
<feature type="binding site" evidence="2">
    <location>
        <begin position="206"/>
        <end position="208"/>
    </location>
    <ligand>
        <name>NAD(+)</name>
        <dbReference type="ChEBI" id="CHEBI:57540"/>
    </ligand>
</feature>
<feature type="binding site" evidence="1">
    <location>
        <position position="235"/>
    </location>
    <ligand>
        <name>substrate</name>
    </ligand>
</feature>
<feature type="binding site" evidence="1">
    <location>
        <position position="239"/>
    </location>
    <ligand>
        <name>substrate</name>
    </ligand>
</feature>
<feature type="binding site" evidence="2">
    <location>
        <begin position="271"/>
        <end position="276"/>
    </location>
    <ligand>
        <name>NAD(+)</name>
        <dbReference type="ChEBI" id="CHEBI:57540"/>
    </ligand>
</feature>
<feature type="binding site" evidence="2">
    <location>
        <position position="292"/>
    </location>
    <ligand>
        <name>NAD(+)</name>
        <dbReference type="ChEBI" id="CHEBI:57540"/>
    </ligand>
</feature>
<feature type="binding site" evidence="2">
    <location>
        <begin position="348"/>
        <end position="350"/>
    </location>
    <ligand>
        <name>NAD(+)</name>
        <dbReference type="ChEBI" id="CHEBI:57540"/>
    </ligand>
</feature>
<feature type="binding site" evidence="2">
    <location>
        <position position="397"/>
    </location>
    <ligand>
        <name>NAD(+)</name>
        <dbReference type="ChEBI" id="CHEBI:57540"/>
    </ligand>
</feature>
<feature type="binding site" evidence="2">
    <location>
        <position position="404"/>
    </location>
    <ligand>
        <name>NAD(+)</name>
        <dbReference type="ChEBI" id="CHEBI:57540"/>
    </ligand>
</feature>
<feature type="binding site" evidence="1">
    <location>
        <begin position="479"/>
        <end position="483"/>
    </location>
    <ligand>
        <name>NAD(+)</name>
        <dbReference type="ChEBI" id="CHEBI:57540"/>
    </ligand>
</feature>
<feature type="binding site" evidence="1">
    <location>
        <position position="479"/>
    </location>
    <ligand>
        <name>NAD(+)</name>
        <dbReference type="ChEBI" id="CHEBI:57540"/>
    </ligand>
</feature>
<feature type="binding site" evidence="1">
    <location>
        <position position="483"/>
    </location>
    <ligand>
        <name>NAD(+)</name>
        <dbReference type="ChEBI" id="CHEBI:57540"/>
    </ligand>
</feature>
<feature type="mutagenesis site" description="In hog1-2; genome-wide demethylation and loss of transcriptional gene silencing." evidence="4">
    <original>G</original>
    <variation>E</variation>
    <location>
        <position position="386"/>
    </location>
</feature>
<feature type="mutagenesis site" description="In hog1-1; genome-wide demethylation and loss of transcriptional gene silencing." evidence="4">
    <original>T</original>
    <variation>I</variation>
    <location>
        <position position="414"/>
    </location>
</feature>
<feature type="mutagenesis site" description="In hog1-3; genome-wide demethylation and loss of transcriptional gene silencing." evidence="4">
    <original>D</original>
    <variation>N</variation>
    <location>
        <position position="444"/>
    </location>
</feature>
<feature type="sequence conflict" description="In Ref. 8; CAB09795." evidence="8" ref="8">
    <original>E</original>
    <variation>Q</variation>
    <location>
        <position position="80"/>
    </location>
</feature>
<feature type="sequence conflict" description="In Ref. 8; CAB09795." evidence="8" ref="8">
    <original>A</original>
    <variation>R</variation>
    <location>
        <position position="96"/>
    </location>
</feature>
<feature type="sequence conflict" description="In Ref. 8; CAB09795." evidence="8" ref="8">
    <original>E</original>
    <variation>Q</variation>
    <location>
        <position position="392"/>
    </location>
</feature>
<feature type="sequence conflict" description="In Ref. 8; CAB09795." evidence="8" ref="8">
    <original>T</original>
    <variation>R</variation>
    <location>
        <position position="460"/>
    </location>
</feature>
<reference key="1">
    <citation type="online journal article" date="1999" name="Plant Gene Register">
        <title>The isolation of an Arabidopsis thaliana cDNA clone encoding S-adenosyl-L-homocysteine hydrolase.</title>
        <authorList>
            <person name="Belbahri L."/>
            <person name="Elleuch H."/>
            <person name="Villarroel R."/>
            <person name="Inze D."/>
            <person name="Thomas D."/>
            <person name="Thomasset B."/>
        </authorList>
        <locator>PGR99-139</locator>
    </citation>
    <scope>NUCLEOTIDE SEQUENCE [MRNA]</scope>
    <source>
        <strain>cv. Landsberg erecta</strain>
    </source>
</reference>
<reference key="2">
    <citation type="journal article" date="2005" name="Plant Cell">
        <title>The Arabidopsis HOMOLOGY-DEPENDENT GENE SILENCING1 gene codes for an S-adenosyl-L-homocysteine hydrolase required for DNA methylation-dependent gene silencing.</title>
        <authorList>
            <person name="Rocha P.S."/>
            <person name="Sheikh M."/>
            <person name="Melchiorre R."/>
            <person name="Fagard M."/>
            <person name="Boutet S."/>
            <person name="Loach R."/>
            <person name="Moffatt B."/>
            <person name="Wagner C."/>
            <person name="Vaucheret H."/>
            <person name="Furner I."/>
        </authorList>
    </citation>
    <scope>NUCLEOTIDE SEQUENCE [MRNA]</scope>
    <scope>MUTAGENESIS OF GLY-386; THR-414 AND ASP-444</scope>
    <scope>FUNCTION</scope>
    <scope>CATALYTIC ACTIVITY</scope>
    <scope>PATHWAY</scope>
</reference>
<reference key="3">
    <citation type="journal article" date="1998" name="Nature">
        <title>Analysis of 1.9 Mb of contiguous sequence from chromosome 4 of Arabidopsis thaliana.</title>
        <authorList>
            <person name="Bevan M."/>
            <person name="Bancroft I."/>
            <person name="Bent E."/>
            <person name="Love K."/>
            <person name="Goodman H.M."/>
            <person name="Dean C."/>
            <person name="Bergkamp R."/>
            <person name="Dirkse W."/>
            <person name="van Staveren M."/>
            <person name="Stiekema W."/>
            <person name="Drost L."/>
            <person name="Ridley P."/>
            <person name="Hudson S.-A."/>
            <person name="Patel K."/>
            <person name="Murphy G."/>
            <person name="Piffanelli P."/>
            <person name="Wedler H."/>
            <person name="Wedler E."/>
            <person name="Wambutt R."/>
            <person name="Weitzenegger T."/>
            <person name="Pohl T."/>
            <person name="Terryn N."/>
            <person name="Gielen J."/>
            <person name="Villarroel R."/>
            <person name="De Clercq R."/>
            <person name="van Montagu M."/>
            <person name="Lecharny A."/>
            <person name="Aubourg S."/>
            <person name="Gy I."/>
            <person name="Kreis M."/>
            <person name="Lao N."/>
            <person name="Kavanagh T."/>
            <person name="Hempel S."/>
            <person name="Kotter P."/>
            <person name="Entian K.-D."/>
            <person name="Rieger M."/>
            <person name="Schaefer M."/>
            <person name="Funk B."/>
            <person name="Mueller-Auer S."/>
            <person name="Silvey M."/>
            <person name="James R."/>
            <person name="Monfort A."/>
            <person name="Pons A."/>
            <person name="Puigdomenech P."/>
            <person name="Douka A."/>
            <person name="Voukelatou E."/>
            <person name="Milioni D."/>
            <person name="Hatzopoulos P."/>
            <person name="Piravandi E."/>
            <person name="Obermaier B."/>
            <person name="Hilbert H."/>
            <person name="Duesterhoeft A."/>
            <person name="Moores T."/>
            <person name="Jones J.D.G."/>
            <person name="Eneva T."/>
            <person name="Palme K."/>
            <person name="Benes V."/>
            <person name="Rechmann S."/>
            <person name="Ansorge W."/>
            <person name="Cooke R."/>
            <person name="Berger C."/>
            <person name="Delseny M."/>
            <person name="Voet M."/>
            <person name="Volckaert G."/>
            <person name="Mewes H.-W."/>
            <person name="Klosterman S."/>
            <person name="Schueller C."/>
            <person name="Chalwatzis N."/>
        </authorList>
    </citation>
    <scope>NUCLEOTIDE SEQUENCE [LARGE SCALE GENOMIC DNA]</scope>
    <source>
        <strain>cv. Columbia</strain>
    </source>
</reference>
<reference key="4">
    <citation type="journal article" date="1999" name="Nature">
        <title>Sequence and analysis of chromosome 4 of the plant Arabidopsis thaliana.</title>
        <authorList>
            <person name="Mayer K.F.X."/>
            <person name="Schueller C."/>
            <person name="Wambutt R."/>
            <person name="Murphy G."/>
            <person name="Volckaert G."/>
            <person name="Pohl T."/>
            <person name="Duesterhoeft A."/>
            <person name="Stiekema W."/>
            <person name="Entian K.-D."/>
            <person name="Terryn N."/>
            <person name="Harris B."/>
            <person name="Ansorge W."/>
            <person name="Brandt P."/>
            <person name="Grivell L.A."/>
            <person name="Rieger M."/>
            <person name="Weichselgartner M."/>
            <person name="de Simone V."/>
            <person name="Obermaier B."/>
            <person name="Mache R."/>
            <person name="Mueller M."/>
            <person name="Kreis M."/>
            <person name="Delseny M."/>
            <person name="Puigdomenech P."/>
            <person name="Watson M."/>
            <person name="Schmidtheini T."/>
            <person name="Reichert B."/>
            <person name="Portetelle D."/>
            <person name="Perez-Alonso M."/>
            <person name="Boutry M."/>
            <person name="Bancroft I."/>
            <person name="Vos P."/>
            <person name="Hoheisel J."/>
            <person name="Zimmermann W."/>
            <person name="Wedler H."/>
            <person name="Ridley P."/>
            <person name="Langham S.-A."/>
            <person name="McCullagh B."/>
            <person name="Bilham L."/>
            <person name="Robben J."/>
            <person name="van der Schueren J."/>
            <person name="Grymonprez B."/>
            <person name="Chuang Y.-J."/>
            <person name="Vandenbussche F."/>
            <person name="Braeken M."/>
            <person name="Weltjens I."/>
            <person name="Voet M."/>
            <person name="Bastiaens I."/>
            <person name="Aert R."/>
            <person name="Defoor E."/>
            <person name="Weitzenegger T."/>
            <person name="Bothe G."/>
            <person name="Ramsperger U."/>
            <person name="Hilbert H."/>
            <person name="Braun M."/>
            <person name="Holzer E."/>
            <person name="Brandt A."/>
            <person name="Peters S."/>
            <person name="van Staveren M."/>
            <person name="Dirkse W."/>
            <person name="Mooijman P."/>
            <person name="Klein Lankhorst R."/>
            <person name="Rose M."/>
            <person name="Hauf J."/>
            <person name="Koetter P."/>
            <person name="Berneiser S."/>
            <person name="Hempel S."/>
            <person name="Feldpausch M."/>
            <person name="Lamberth S."/>
            <person name="Van den Daele H."/>
            <person name="De Keyser A."/>
            <person name="Buysshaert C."/>
            <person name="Gielen J."/>
            <person name="Villarroel R."/>
            <person name="De Clercq R."/>
            <person name="van Montagu M."/>
            <person name="Rogers J."/>
            <person name="Cronin A."/>
            <person name="Quail M.A."/>
            <person name="Bray-Allen S."/>
            <person name="Clark L."/>
            <person name="Doggett J."/>
            <person name="Hall S."/>
            <person name="Kay M."/>
            <person name="Lennard N."/>
            <person name="McLay K."/>
            <person name="Mayes R."/>
            <person name="Pettett A."/>
            <person name="Rajandream M.A."/>
            <person name="Lyne M."/>
            <person name="Benes V."/>
            <person name="Rechmann S."/>
            <person name="Borkova D."/>
            <person name="Bloecker H."/>
            <person name="Scharfe M."/>
            <person name="Grimm M."/>
            <person name="Loehnert T.-H."/>
            <person name="Dose S."/>
            <person name="de Haan M."/>
            <person name="Maarse A.C."/>
            <person name="Schaefer M."/>
            <person name="Mueller-Auer S."/>
            <person name="Gabel C."/>
            <person name="Fuchs M."/>
            <person name="Fartmann B."/>
            <person name="Granderath K."/>
            <person name="Dauner D."/>
            <person name="Herzl A."/>
            <person name="Neumann S."/>
            <person name="Argiriou A."/>
            <person name="Vitale D."/>
            <person name="Liguori R."/>
            <person name="Piravandi E."/>
            <person name="Massenet O."/>
            <person name="Quigley F."/>
            <person name="Clabauld G."/>
            <person name="Muendlein A."/>
            <person name="Felber R."/>
            <person name="Schnabl S."/>
            <person name="Hiller R."/>
            <person name="Schmidt W."/>
            <person name="Lecharny A."/>
            <person name="Aubourg S."/>
            <person name="Chefdor F."/>
            <person name="Cooke R."/>
            <person name="Berger C."/>
            <person name="Monfort A."/>
            <person name="Casacuberta E."/>
            <person name="Gibbons T."/>
            <person name="Weber N."/>
            <person name="Vandenbol M."/>
            <person name="Bargues M."/>
            <person name="Terol J."/>
            <person name="Torres A."/>
            <person name="Perez-Perez A."/>
            <person name="Purnelle B."/>
            <person name="Bent E."/>
            <person name="Johnson S."/>
            <person name="Tacon D."/>
            <person name="Jesse T."/>
            <person name="Heijnen L."/>
            <person name="Schwarz S."/>
            <person name="Scholler P."/>
            <person name="Heber S."/>
            <person name="Francs P."/>
            <person name="Bielke C."/>
            <person name="Frishman D."/>
            <person name="Haase D."/>
            <person name="Lemcke K."/>
            <person name="Mewes H.-W."/>
            <person name="Stocker S."/>
            <person name="Zaccaria P."/>
            <person name="Bevan M."/>
            <person name="Wilson R.K."/>
            <person name="de la Bastide M."/>
            <person name="Habermann K."/>
            <person name="Parnell L."/>
            <person name="Dedhia N."/>
            <person name="Gnoj L."/>
            <person name="Schutz K."/>
            <person name="Huang E."/>
            <person name="Spiegel L."/>
            <person name="Sekhon M."/>
            <person name="Murray J."/>
            <person name="Sheet P."/>
            <person name="Cordes M."/>
            <person name="Abu-Threideh J."/>
            <person name="Stoneking T."/>
            <person name="Kalicki J."/>
            <person name="Graves T."/>
            <person name="Harmon G."/>
            <person name="Edwards J."/>
            <person name="Latreille P."/>
            <person name="Courtney L."/>
            <person name="Cloud J."/>
            <person name="Abbott A."/>
            <person name="Scott K."/>
            <person name="Johnson D."/>
            <person name="Minx P."/>
            <person name="Bentley D."/>
            <person name="Fulton B."/>
            <person name="Miller N."/>
            <person name="Greco T."/>
            <person name="Kemp K."/>
            <person name="Kramer J."/>
            <person name="Fulton L."/>
            <person name="Mardis E."/>
            <person name="Dante M."/>
            <person name="Pepin K."/>
            <person name="Hillier L.W."/>
            <person name="Nelson J."/>
            <person name="Spieth J."/>
            <person name="Ryan E."/>
            <person name="Andrews S."/>
            <person name="Geisel C."/>
            <person name="Layman D."/>
            <person name="Du H."/>
            <person name="Ali J."/>
            <person name="Berghoff A."/>
            <person name="Jones K."/>
            <person name="Drone K."/>
            <person name="Cotton M."/>
            <person name="Joshu C."/>
            <person name="Antonoiu B."/>
            <person name="Zidanic M."/>
            <person name="Strong C."/>
            <person name="Sun H."/>
            <person name="Lamar B."/>
            <person name="Yordan C."/>
            <person name="Ma P."/>
            <person name="Zhong J."/>
            <person name="Preston R."/>
            <person name="Vil D."/>
            <person name="Shekher M."/>
            <person name="Matero A."/>
            <person name="Shah R."/>
            <person name="Swaby I.K."/>
            <person name="O'Shaughnessy A."/>
            <person name="Rodriguez M."/>
            <person name="Hoffman J."/>
            <person name="Till S."/>
            <person name="Granat S."/>
            <person name="Shohdy N."/>
            <person name="Hasegawa A."/>
            <person name="Hameed A."/>
            <person name="Lodhi M."/>
            <person name="Johnson A."/>
            <person name="Chen E."/>
            <person name="Marra M.A."/>
            <person name="Martienssen R."/>
            <person name="McCombie W.R."/>
        </authorList>
    </citation>
    <scope>NUCLEOTIDE SEQUENCE [LARGE SCALE GENOMIC DNA]</scope>
    <source>
        <strain>cv. Columbia</strain>
    </source>
</reference>
<reference key="5">
    <citation type="journal article" date="2017" name="Plant J.">
        <title>Araport11: a complete reannotation of the Arabidopsis thaliana reference genome.</title>
        <authorList>
            <person name="Cheng C.Y."/>
            <person name="Krishnakumar V."/>
            <person name="Chan A.P."/>
            <person name="Thibaud-Nissen F."/>
            <person name="Schobel S."/>
            <person name="Town C.D."/>
        </authorList>
    </citation>
    <scope>GENOME REANNOTATION</scope>
    <source>
        <strain>cv. Columbia</strain>
    </source>
</reference>
<reference key="6">
    <citation type="journal article" date="2003" name="Science">
        <title>Empirical analysis of transcriptional activity in the Arabidopsis genome.</title>
        <authorList>
            <person name="Yamada K."/>
            <person name="Lim J."/>
            <person name="Dale J.M."/>
            <person name="Chen H."/>
            <person name="Shinn P."/>
            <person name="Palm C.J."/>
            <person name="Southwick A.M."/>
            <person name="Wu H.C."/>
            <person name="Kim C.J."/>
            <person name="Nguyen M."/>
            <person name="Pham P.K."/>
            <person name="Cheuk R.F."/>
            <person name="Karlin-Newmann G."/>
            <person name="Liu S.X."/>
            <person name="Lam B."/>
            <person name="Sakano H."/>
            <person name="Wu T."/>
            <person name="Yu G."/>
            <person name="Miranda M."/>
            <person name="Quach H.L."/>
            <person name="Tripp M."/>
            <person name="Chang C.H."/>
            <person name="Lee J.M."/>
            <person name="Toriumi M.J."/>
            <person name="Chan M.M."/>
            <person name="Tang C.C."/>
            <person name="Onodera C.S."/>
            <person name="Deng J.M."/>
            <person name="Akiyama K."/>
            <person name="Ansari Y."/>
            <person name="Arakawa T."/>
            <person name="Banh J."/>
            <person name="Banno F."/>
            <person name="Bowser L."/>
            <person name="Brooks S.Y."/>
            <person name="Carninci P."/>
            <person name="Chao Q."/>
            <person name="Choy N."/>
            <person name="Enju A."/>
            <person name="Goldsmith A.D."/>
            <person name="Gurjal M."/>
            <person name="Hansen N.F."/>
            <person name="Hayashizaki Y."/>
            <person name="Johnson-Hopson C."/>
            <person name="Hsuan V.W."/>
            <person name="Iida K."/>
            <person name="Karnes M."/>
            <person name="Khan S."/>
            <person name="Koesema E."/>
            <person name="Ishida J."/>
            <person name="Jiang P.X."/>
            <person name="Jones T."/>
            <person name="Kawai J."/>
            <person name="Kamiya A."/>
            <person name="Meyers C."/>
            <person name="Nakajima M."/>
            <person name="Narusaka M."/>
            <person name="Seki M."/>
            <person name="Sakurai T."/>
            <person name="Satou M."/>
            <person name="Tamse R."/>
            <person name="Vaysberg M."/>
            <person name="Wallender E.K."/>
            <person name="Wong C."/>
            <person name="Yamamura Y."/>
            <person name="Yuan S."/>
            <person name="Shinozaki K."/>
            <person name="Davis R.W."/>
            <person name="Theologis A."/>
            <person name="Ecker J.R."/>
        </authorList>
    </citation>
    <scope>NUCLEOTIDE SEQUENCE [LARGE SCALE MRNA]</scope>
    <source>
        <strain>cv. Columbia</strain>
    </source>
</reference>
<reference key="7">
    <citation type="submission" date="2002-03" db="EMBL/GenBank/DDBJ databases">
        <title>Full-length cDNA from Arabidopsis thaliana.</title>
        <authorList>
            <person name="Brover V.V."/>
            <person name="Troukhan M.E."/>
            <person name="Alexandrov N.A."/>
            <person name="Lu Y.-P."/>
            <person name="Flavell R.B."/>
            <person name="Feldmann K.A."/>
        </authorList>
    </citation>
    <scope>NUCLEOTIDE SEQUENCE [LARGE SCALE MRNA]</scope>
</reference>
<reference key="8">
    <citation type="submission" date="1997-06" db="EMBL/GenBank/DDBJ databases">
        <title>Identification of novel nitrate-inducible genes from Arabidopsis.</title>
        <authorList>
            <person name="Zhang H."/>
            <person name="Forde B.G."/>
        </authorList>
    </citation>
    <scope>NUCLEOTIDE SEQUENCE OF 19-485</scope>
    <source>
        <strain>cv. Landsberg erecta</strain>
    </source>
</reference>
<reference key="9">
    <citation type="journal article" date="2004" name="Plant Physiol.">
        <title>Identification of genes required for embryo development in Arabidopsis.</title>
        <authorList>
            <person name="Tzafrir I."/>
            <person name="Pena-Muralla R."/>
            <person name="Dickerman A."/>
            <person name="Berg M."/>
            <person name="Rogers R."/>
            <person name="Hutchens S."/>
            <person name="Sweeney T.C."/>
            <person name="McElver J."/>
            <person name="Aux G."/>
            <person name="Patton D."/>
            <person name="Meinke D."/>
        </authorList>
    </citation>
    <scope>FUNCTION</scope>
    <scope>DISRUPTION PHENOTYPE</scope>
    <source>
        <strain>cv. Columbia</strain>
        <strain>cv. Wassilewskija</strain>
    </source>
</reference>
<comment type="function">
    <text evidence="3 4">Essential protein during embryogenesis (PubMed:15266054). Adenosylhomocysteine is a competitive inhibitor of S-adenosyl-L-methionine-dependent methyl transferase reactions; therefore adenosylhomocysteinase may play a key role in the control of methylations via regulation of the intracellular concentration of adenosylhomocysteine (PubMed:15659630). Required for DNA methylation-dependent gene silencing (PubMed:15659630).</text>
</comment>
<comment type="catalytic activity">
    <reaction evidence="4">
        <text>S-adenosyl-L-homocysteine + H2O = L-homocysteine + adenosine</text>
        <dbReference type="Rhea" id="RHEA:21708"/>
        <dbReference type="ChEBI" id="CHEBI:15377"/>
        <dbReference type="ChEBI" id="CHEBI:16335"/>
        <dbReference type="ChEBI" id="CHEBI:57856"/>
        <dbReference type="ChEBI" id="CHEBI:58199"/>
        <dbReference type="EC" id="3.13.2.1"/>
    </reaction>
</comment>
<comment type="cofactor">
    <cofactor evidence="2">
        <name>NAD(+)</name>
        <dbReference type="ChEBI" id="CHEBI:57540"/>
    </cofactor>
    <text evidence="2">Binds 1 NAD(+) per subunit.</text>
</comment>
<comment type="pathway">
    <text evidence="4">Amino-acid biosynthesis; L-homocysteine biosynthesis; L-homocysteine from S-adenosyl-L-homocysteine: step 1/1.</text>
</comment>
<comment type="subunit">
    <text evidence="2">Homotetramer.</text>
</comment>
<comment type="alternative products">
    <event type="alternative splicing"/>
    <isoform>
        <id>O23255-1</id>
        <name>1</name>
        <sequence type="displayed"/>
    </isoform>
    <text>A number of isoforms are produced. According to EST sequences.</text>
</comment>
<comment type="disruption phenotype">
    <text evidence="3">Embryo defective arrested at the globular stage (PubMed:15266054). Null mutations are homozygous lethal (PubMed:15266054).</text>
</comment>
<comment type="similarity">
    <text evidence="8">Belongs to the adenosylhomocysteinase family.</text>
</comment>
<comment type="online information" name="Seed defective Arabidopsis mutants">
    <link uri="http://seedgenes.org/MutantList"/>
</comment>
<accession>O23255</accession>
<accession>O81847</accession>
<accession>Q8LE20</accession>
<proteinExistence type="evidence at protein level"/>
<name>SAHH1_ARATH</name>
<dbReference type="EC" id="3.13.2.1" evidence="4"/>
<dbReference type="EMBL" id="AF059581">
    <property type="protein sequence ID" value="AAC14714.1"/>
    <property type="molecule type" value="mRNA"/>
</dbReference>
<dbReference type="EMBL" id="Z97335">
    <property type="protein sequence ID" value="CAB10173.1"/>
    <property type="molecule type" value="Genomic_DNA"/>
</dbReference>
<dbReference type="EMBL" id="AL161537">
    <property type="protein sequence ID" value="CAB78436.1"/>
    <property type="molecule type" value="Genomic_DNA"/>
</dbReference>
<dbReference type="EMBL" id="CP002687">
    <property type="protein sequence ID" value="AEE83345.1"/>
    <property type="molecule type" value="Genomic_DNA"/>
</dbReference>
<dbReference type="EMBL" id="AF325037">
    <property type="protein sequence ID" value="AAG40389.1"/>
    <property type="molecule type" value="mRNA"/>
</dbReference>
<dbReference type="EMBL" id="AY042866">
    <property type="protein sequence ID" value="AAK68806.1"/>
    <property type="molecule type" value="mRNA"/>
</dbReference>
<dbReference type="EMBL" id="AY049279">
    <property type="protein sequence ID" value="AAK83621.1"/>
    <property type="molecule type" value="mRNA"/>
</dbReference>
<dbReference type="EMBL" id="AY081468">
    <property type="protein sequence ID" value="AAM10030.1"/>
    <property type="molecule type" value="mRNA"/>
</dbReference>
<dbReference type="EMBL" id="AY090284">
    <property type="protein sequence ID" value="AAL90945.1"/>
    <property type="molecule type" value="mRNA"/>
</dbReference>
<dbReference type="EMBL" id="BT002404">
    <property type="protein sequence ID" value="AAO00764.1"/>
    <property type="molecule type" value="mRNA"/>
</dbReference>
<dbReference type="EMBL" id="AY085669">
    <property type="protein sequence ID" value="AAM62888.1"/>
    <property type="molecule type" value="mRNA"/>
</dbReference>
<dbReference type="EMBL" id="Z97059">
    <property type="protein sequence ID" value="CAB09795.1"/>
    <property type="molecule type" value="mRNA"/>
</dbReference>
<dbReference type="PIR" id="C71400">
    <property type="entry name" value="C71400"/>
</dbReference>
<dbReference type="RefSeq" id="NP_193130.1">
    <molecule id="O23255-1"/>
    <property type="nucleotide sequence ID" value="NM_117468.3"/>
</dbReference>
<dbReference type="SMR" id="O23255"/>
<dbReference type="BioGRID" id="12325">
    <property type="interactions" value="13"/>
</dbReference>
<dbReference type="FunCoup" id="O23255">
    <property type="interactions" value="3121"/>
</dbReference>
<dbReference type="IntAct" id="O23255">
    <property type="interactions" value="2"/>
</dbReference>
<dbReference type="STRING" id="3702.O23255"/>
<dbReference type="iPTMnet" id="O23255"/>
<dbReference type="PaxDb" id="3702-AT4G13940.1"/>
<dbReference type="EnsemblPlants" id="AT4G13940.1">
    <molecule id="O23255-1"/>
    <property type="protein sequence ID" value="AT4G13940.1"/>
    <property type="gene ID" value="AT4G13940"/>
</dbReference>
<dbReference type="GeneID" id="827028"/>
<dbReference type="Gramene" id="AT4G13940.1">
    <molecule id="O23255-1"/>
    <property type="protein sequence ID" value="AT4G13940.1"/>
    <property type="gene ID" value="AT4G13940"/>
</dbReference>
<dbReference type="KEGG" id="ath:AT4G13940"/>
<dbReference type="Araport" id="AT4G13940"/>
<dbReference type="TAIR" id="AT4G13940">
    <property type="gene designation" value="HOG1"/>
</dbReference>
<dbReference type="eggNOG" id="KOG1370">
    <property type="taxonomic scope" value="Eukaryota"/>
</dbReference>
<dbReference type="InParanoid" id="O23255"/>
<dbReference type="OrthoDB" id="1052086at2759"/>
<dbReference type="PhylomeDB" id="O23255"/>
<dbReference type="BioCyc" id="ARA:AT4G13940-MONOMER"/>
<dbReference type="UniPathway" id="UPA00314">
    <property type="reaction ID" value="UER00076"/>
</dbReference>
<dbReference type="CD-CODE" id="4299E36E">
    <property type="entry name" value="Nucleolus"/>
</dbReference>
<dbReference type="PRO" id="PR:O23255"/>
<dbReference type="Proteomes" id="UP000006548">
    <property type="component" value="Chromosome 4"/>
</dbReference>
<dbReference type="ExpressionAtlas" id="O23255">
    <property type="expression patterns" value="baseline and differential"/>
</dbReference>
<dbReference type="GO" id="GO:0005829">
    <property type="term" value="C:cytosol"/>
    <property type="evidence" value="ECO:0007005"/>
    <property type="project" value="TAIR"/>
</dbReference>
<dbReference type="GO" id="GO:0000325">
    <property type="term" value="C:plant-type vacuole"/>
    <property type="evidence" value="ECO:0007005"/>
    <property type="project" value="TAIR"/>
</dbReference>
<dbReference type="GO" id="GO:0005886">
    <property type="term" value="C:plasma membrane"/>
    <property type="evidence" value="ECO:0007005"/>
    <property type="project" value="TAIR"/>
</dbReference>
<dbReference type="GO" id="GO:0009506">
    <property type="term" value="C:plasmodesma"/>
    <property type="evidence" value="ECO:0007005"/>
    <property type="project" value="TAIR"/>
</dbReference>
<dbReference type="GO" id="GO:0005773">
    <property type="term" value="C:vacuole"/>
    <property type="evidence" value="ECO:0007005"/>
    <property type="project" value="TAIR"/>
</dbReference>
<dbReference type="GO" id="GO:0004013">
    <property type="term" value="F:adenosylhomocysteinase activity"/>
    <property type="evidence" value="ECO:0000315"/>
    <property type="project" value="TAIR"/>
</dbReference>
<dbReference type="GO" id="GO:0005507">
    <property type="term" value="F:copper ion binding"/>
    <property type="evidence" value="ECO:0007005"/>
    <property type="project" value="TAIR"/>
</dbReference>
<dbReference type="GO" id="GO:0003729">
    <property type="term" value="F:mRNA binding"/>
    <property type="evidence" value="ECO:0000314"/>
    <property type="project" value="TAIR"/>
</dbReference>
<dbReference type="GO" id="GO:0006346">
    <property type="term" value="P:DNA methylation-dependent constitutive heterochromatin formation"/>
    <property type="evidence" value="ECO:0000315"/>
    <property type="project" value="TAIR"/>
</dbReference>
<dbReference type="GO" id="GO:0009793">
    <property type="term" value="P:embryo development ending in seed dormancy"/>
    <property type="evidence" value="ECO:0000315"/>
    <property type="project" value="TAIR"/>
</dbReference>
<dbReference type="GO" id="GO:0006730">
    <property type="term" value="P:one-carbon metabolic process"/>
    <property type="evidence" value="ECO:0007669"/>
    <property type="project" value="UniProtKB-KW"/>
</dbReference>
<dbReference type="GO" id="GO:0016441">
    <property type="term" value="P:post-transcriptional gene silencing"/>
    <property type="evidence" value="ECO:0000315"/>
    <property type="project" value="TAIR"/>
</dbReference>
<dbReference type="CDD" id="cd00401">
    <property type="entry name" value="SAHH"/>
    <property type="match status" value="1"/>
</dbReference>
<dbReference type="FunFam" id="3.40.50.720:FF:000004">
    <property type="entry name" value="Adenosylhomocysteinase"/>
    <property type="match status" value="1"/>
</dbReference>
<dbReference type="Gene3D" id="3.40.50.1480">
    <property type="entry name" value="Adenosylhomocysteinase-like"/>
    <property type="match status" value="1"/>
</dbReference>
<dbReference type="Gene3D" id="3.40.50.720">
    <property type="entry name" value="NAD(P)-binding Rossmann-like Domain"/>
    <property type="match status" value="1"/>
</dbReference>
<dbReference type="HAMAP" id="MF_00563">
    <property type="entry name" value="AdoHcyase"/>
    <property type="match status" value="1"/>
</dbReference>
<dbReference type="InterPro" id="IPR042172">
    <property type="entry name" value="Adenosylhomocyst_ase-like_sf"/>
</dbReference>
<dbReference type="InterPro" id="IPR000043">
    <property type="entry name" value="Adenosylhomocysteinase-like"/>
</dbReference>
<dbReference type="InterPro" id="IPR015878">
    <property type="entry name" value="Ado_hCys_hydrolase_NAD-bd"/>
</dbReference>
<dbReference type="InterPro" id="IPR036291">
    <property type="entry name" value="NAD(P)-bd_dom_sf"/>
</dbReference>
<dbReference type="InterPro" id="IPR020082">
    <property type="entry name" value="S-Ado-L-homoCys_hydrolase_CS"/>
</dbReference>
<dbReference type="NCBIfam" id="TIGR00936">
    <property type="entry name" value="ahcY"/>
    <property type="match status" value="1"/>
</dbReference>
<dbReference type="NCBIfam" id="NF004005">
    <property type="entry name" value="PRK05476.2-3"/>
    <property type="match status" value="1"/>
</dbReference>
<dbReference type="PANTHER" id="PTHR23420">
    <property type="entry name" value="ADENOSYLHOMOCYSTEINASE"/>
    <property type="match status" value="1"/>
</dbReference>
<dbReference type="PANTHER" id="PTHR23420:SF29">
    <property type="entry name" value="ADENOSYLHOMOCYSTEINASE 1"/>
    <property type="match status" value="1"/>
</dbReference>
<dbReference type="Pfam" id="PF05221">
    <property type="entry name" value="AdoHcyase"/>
    <property type="match status" value="1"/>
</dbReference>
<dbReference type="Pfam" id="PF00670">
    <property type="entry name" value="AdoHcyase_NAD"/>
    <property type="match status" value="1"/>
</dbReference>
<dbReference type="PIRSF" id="PIRSF001109">
    <property type="entry name" value="Ad_hcy_hydrolase"/>
    <property type="match status" value="1"/>
</dbReference>
<dbReference type="SMART" id="SM00996">
    <property type="entry name" value="AdoHcyase"/>
    <property type="match status" value="1"/>
</dbReference>
<dbReference type="SMART" id="SM00997">
    <property type="entry name" value="AdoHcyase_NAD"/>
    <property type="match status" value="1"/>
</dbReference>
<dbReference type="SUPFAM" id="SSF52283">
    <property type="entry name" value="Formate/glycerate dehydrogenase catalytic domain-like"/>
    <property type="match status" value="2"/>
</dbReference>
<dbReference type="SUPFAM" id="SSF51735">
    <property type="entry name" value="NAD(P)-binding Rossmann-fold domains"/>
    <property type="match status" value="1"/>
</dbReference>
<dbReference type="PROSITE" id="PS00738">
    <property type="entry name" value="ADOHCYASE_1"/>
    <property type="match status" value="1"/>
</dbReference>
<dbReference type="PROSITE" id="PS00739">
    <property type="entry name" value="ADOHCYASE_2"/>
    <property type="match status" value="1"/>
</dbReference>
<evidence type="ECO:0000250" key="1">
    <source>
        <dbReference type="UniProtKB" id="P10760"/>
    </source>
</evidence>
<evidence type="ECO:0000250" key="2">
    <source>
        <dbReference type="UniProtKB" id="P23526"/>
    </source>
</evidence>
<evidence type="ECO:0000269" key="3">
    <source>
    </source>
</evidence>
<evidence type="ECO:0000269" key="4">
    <source>
    </source>
</evidence>
<evidence type="ECO:0000303" key="5">
    <source>
    </source>
</evidence>
<evidence type="ECO:0000303" key="6">
    <source>
    </source>
</evidence>
<evidence type="ECO:0000303" key="7">
    <source ref="1"/>
</evidence>
<evidence type="ECO:0000305" key="8"/>
<evidence type="ECO:0000312" key="9">
    <source>
        <dbReference type="Araport" id="AT4G13940"/>
    </source>
</evidence>
<evidence type="ECO:0000312" key="10">
    <source>
        <dbReference type="EMBL" id="CAB10173.1"/>
    </source>
</evidence>
<sequence>MALLVEKTSSGREYKVKDMSQADFGRLELELAEVEMPGLMACRTEFGPSQPFKGARITGSLHMTIQTAVLIETLTALGAEVRWCSCNIFSTQDHAAAAIARDSAAVFAWKGETLQEYWWCTERALDWGPGGGPDLIVDDGGDATLLIHEGVKAEEIFEKTGQVPDPTSTDNPEFQIVLSIIKEGLQVDPKKYHKMKERLVGVSEETTTGVKRLYQMQQNGTLLFPAINVNDSVTKSKFDNLYGCRHSLPDGLMRATDVMIAGKVAVICGYGDVGKGCAAAMKTAGARVIVTEIDPICALQALMEGLQVLTLEDVVSEADIFVTTTGNKDIIMVDHMRKMKNNAIVCNIGHFDNEIDMLGLETYPGVKRITIKPQTDRWVFPETKAGIIVLAEGRLMNLGCATGHPSFVMSCSFTNQVIAQLELWNEKASGKYEKKVYVLPKHLDEKVALLHLGKLGARLTKLSKDQSDYVSIPIEGPYKPPHYRY</sequence>
<gene>
    <name evidence="6 7" type="primary">SAHH1</name>
    <name type="synonym">EMB1395</name>
    <name evidence="6" type="synonym">HOG1</name>
    <name evidence="9" type="ordered locus">At4g13940</name>
    <name evidence="10" type="ORF">dl3010w</name>
</gene>
<organism>
    <name type="scientific">Arabidopsis thaliana</name>
    <name type="common">Mouse-ear cress</name>
    <dbReference type="NCBI Taxonomy" id="3702"/>
    <lineage>
        <taxon>Eukaryota</taxon>
        <taxon>Viridiplantae</taxon>
        <taxon>Streptophyta</taxon>
        <taxon>Embryophyta</taxon>
        <taxon>Tracheophyta</taxon>
        <taxon>Spermatophyta</taxon>
        <taxon>Magnoliopsida</taxon>
        <taxon>eudicotyledons</taxon>
        <taxon>Gunneridae</taxon>
        <taxon>Pentapetalae</taxon>
        <taxon>rosids</taxon>
        <taxon>malvids</taxon>
        <taxon>Brassicales</taxon>
        <taxon>Brassicaceae</taxon>
        <taxon>Camelineae</taxon>
        <taxon>Arabidopsis</taxon>
    </lineage>
</organism>
<protein>
    <recommendedName>
        <fullName evidence="6">Adenosylhomocysteinase 1</fullName>
        <shortName evidence="6">AdoHcyase 1</shortName>
        <ecNumber evidence="4">3.13.2.1</ecNumber>
    </recommendedName>
    <alternativeName>
        <fullName evidence="5">Protein EMBRYO DEFECTIVE 1395</fullName>
    </alternativeName>
    <alternativeName>
        <fullName evidence="6">Protein HOMOLOGY-DEPENDENT GENE SILENCING 1</fullName>
    </alternativeName>
    <alternativeName>
        <fullName evidence="6 7">S-adenosyl-L-homocysteine hydrolase 1</fullName>
        <shortName evidence="6 7">SAH hydrolase 1</shortName>
    </alternativeName>
</protein>
<keyword id="KW-0025">Alternative splicing</keyword>
<keyword id="KW-0378">Hydrolase</keyword>
<keyword id="KW-0520">NAD</keyword>
<keyword id="KW-0554">One-carbon metabolism</keyword>
<keyword id="KW-1185">Reference proteome</keyword>